<dbReference type="EMBL" id="AC160932">
    <property type="status" value="NOT_ANNOTATED_CDS"/>
    <property type="molecule type" value="Genomic_DNA"/>
</dbReference>
<dbReference type="EMBL" id="CH466526">
    <property type="protein sequence ID" value="EDL36927.1"/>
    <property type="molecule type" value="Genomic_DNA"/>
</dbReference>
<dbReference type="EMBL" id="BC046522">
    <property type="protein sequence ID" value="AAH46522.1"/>
    <property type="status" value="ALT_INIT"/>
    <property type="molecule type" value="mRNA"/>
</dbReference>
<dbReference type="CCDS" id="CCDS49044.1"/>
<dbReference type="RefSeq" id="NP_001153215.1">
    <property type="nucleotide sequence ID" value="NM_001159743.2"/>
</dbReference>
<dbReference type="SMR" id="Q80UG6"/>
<dbReference type="FunCoup" id="Q80UG6">
    <property type="interactions" value="27"/>
</dbReference>
<dbReference type="STRING" id="10090.ENSMUSP00000070037"/>
<dbReference type="PaxDb" id="10090-ENSMUSP00000070037"/>
<dbReference type="Antibodypedia" id="62864">
    <property type="antibodies" value="1 antibodies from 1 providers"/>
</dbReference>
<dbReference type="Ensembl" id="ENSMUST00000067087.7">
    <property type="protein sequence ID" value="ENSMUSP00000070037.7"/>
    <property type="gene ID" value="ENSMUSG00000054204.7"/>
</dbReference>
<dbReference type="GeneID" id="100294583"/>
<dbReference type="KEGG" id="mmu:100294583"/>
<dbReference type="UCSC" id="uc007ngv.1">
    <property type="organism name" value="mouse"/>
</dbReference>
<dbReference type="AGR" id="MGI:3697448"/>
<dbReference type="CTD" id="285016"/>
<dbReference type="MGI" id="MGI:3697448">
    <property type="gene designation" value="Alkal2"/>
</dbReference>
<dbReference type="VEuPathDB" id="HostDB:ENSMUSG00000054204"/>
<dbReference type="eggNOG" id="ENOG502S2JY">
    <property type="taxonomic scope" value="Eukaryota"/>
</dbReference>
<dbReference type="GeneTree" id="ENSGT00940000162505"/>
<dbReference type="HOGENOM" id="CLU_120534_0_0_1"/>
<dbReference type="InParanoid" id="Q80UG6"/>
<dbReference type="OMA" id="SPMCMER"/>
<dbReference type="OrthoDB" id="9807651at2759"/>
<dbReference type="PhylomeDB" id="Q80UG6"/>
<dbReference type="TreeFam" id="TF333390"/>
<dbReference type="Reactome" id="R-MMU-201556">
    <property type="pathway name" value="Signaling by ALK"/>
</dbReference>
<dbReference type="Reactome" id="R-MMU-9842663">
    <property type="pathway name" value="Signaling by LTK"/>
</dbReference>
<dbReference type="BioGRID-ORCS" id="100294583">
    <property type="hits" value="2 hits in 77 CRISPR screens"/>
</dbReference>
<dbReference type="PRO" id="PR:Q80UG6"/>
<dbReference type="Proteomes" id="UP000000589">
    <property type="component" value="Chromosome 12"/>
</dbReference>
<dbReference type="RNAct" id="Q80UG6">
    <property type="molecule type" value="protein"/>
</dbReference>
<dbReference type="Bgee" id="ENSMUSG00000054204">
    <property type="expression patterns" value="Expressed in uterus and 36 other cell types or tissues"/>
</dbReference>
<dbReference type="GO" id="GO:0005576">
    <property type="term" value="C:extracellular region"/>
    <property type="evidence" value="ECO:0000250"/>
    <property type="project" value="UniProtKB"/>
</dbReference>
<dbReference type="GO" id="GO:0005615">
    <property type="term" value="C:extracellular space"/>
    <property type="evidence" value="ECO:0007669"/>
    <property type="project" value="UniProtKB-KW"/>
</dbReference>
<dbReference type="GO" id="GO:0005886">
    <property type="term" value="C:plasma membrane"/>
    <property type="evidence" value="ECO:0007669"/>
    <property type="project" value="UniProtKB-SubCell"/>
</dbReference>
<dbReference type="GO" id="GO:0005125">
    <property type="term" value="F:cytokine activity"/>
    <property type="evidence" value="ECO:0000250"/>
    <property type="project" value="UniProtKB"/>
</dbReference>
<dbReference type="GO" id="GO:0030298">
    <property type="term" value="F:receptor signaling protein tyrosine kinase activator activity"/>
    <property type="evidence" value="ECO:0000250"/>
    <property type="project" value="UniProtKB"/>
</dbReference>
<dbReference type="GO" id="GO:0030971">
    <property type="term" value="F:receptor tyrosine kinase binding"/>
    <property type="evidence" value="ECO:0007669"/>
    <property type="project" value="Ensembl"/>
</dbReference>
<dbReference type="GO" id="GO:0030297">
    <property type="term" value="F:transmembrane receptor protein tyrosine kinase activator activity"/>
    <property type="evidence" value="ECO:0007669"/>
    <property type="project" value="Ensembl"/>
</dbReference>
<dbReference type="GO" id="GO:0007169">
    <property type="term" value="P:cell surface receptor protein tyrosine kinase signaling pathway"/>
    <property type="evidence" value="ECO:0007669"/>
    <property type="project" value="Ensembl"/>
</dbReference>
<dbReference type="GO" id="GO:0070374">
    <property type="term" value="P:positive regulation of ERK1 and ERK2 cascade"/>
    <property type="evidence" value="ECO:0007669"/>
    <property type="project" value="Ensembl"/>
</dbReference>
<dbReference type="GO" id="GO:0070378">
    <property type="term" value="P:positive regulation of ERK5 cascade"/>
    <property type="evidence" value="ECO:0007669"/>
    <property type="project" value="Ensembl"/>
</dbReference>
<dbReference type="GO" id="GO:0010976">
    <property type="term" value="P:positive regulation of neuron projection development"/>
    <property type="evidence" value="ECO:0000250"/>
    <property type="project" value="UniProtKB"/>
</dbReference>
<dbReference type="InterPro" id="IPR029364">
    <property type="entry name" value="ALKL1/2"/>
</dbReference>
<dbReference type="PANTHER" id="PTHR28676:SF2">
    <property type="entry name" value="ALK AND LTK LIGAND 2"/>
    <property type="match status" value="1"/>
</dbReference>
<dbReference type="PANTHER" id="PTHR28676">
    <property type="entry name" value="ALK AND LTK LIGAND 2-RELATED"/>
    <property type="match status" value="1"/>
</dbReference>
<dbReference type="Pfam" id="PF15129">
    <property type="entry name" value="ALKL1_2"/>
    <property type="match status" value="1"/>
</dbReference>
<comment type="function">
    <text evidence="1">Cytokine that acts as a physiological ligand for receptor tyrosine kinases LTK and ALK, leading to their activation. Cytokine-binding is sufficient to activate LTK. In contrast, ALKAL2-driven activation of ALK is coupled with heparin-binding to ALK. Stimulation of ALK signaling is involved in neural development and regulation of energy expenditure.</text>
</comment>
<comment type="subunit">
    <text evidence="1">Homodimer.</text>
</comment>
<comment type="subcellular location">
    <subcellularLocation>
        <location evidence="1">Secreted</location>
    </subcellularLocation>
    <subcellularLocation>
        <location evidence="1">Cell membrane</location>
    </subcellularLocation>
    <text evidence="1">Following interaction with receptor tyrosine kinase ALK, associates with the cell membrane, membrane-binding is required to activate ALK.</text>
</comment>
<comment type="similarity">
    <text evidence="3">Belongs to the ALKAL family.</text>
</comment>
<comment type="sequence caution" evidence="3">
    <conflict type="erroneous initiation">
        <sequence resource="EMBL-CDS" id="AAH46522"/>
    </conflict>
</comment>
<accession>Q80UG6</accession>
<accession>G3X9F3</accession>
<proteinExistence type="evidence at transcript level"/>
<keyword id="KW-1003">Cell membrane</keyword>
<keyword id="KW-0202">Cytokine</keyword>
<keyword id="KW-1015">Disulfide bond</keyword>
<keyword id="KW-0472">Membrane</keyword>
<keyword id="KW-1185">Reference proteome</keyword>
<keyword id="KW-0964">Secreted</keyword>
<keyword id="KW-0732">Signal</keyword>
<organism>
    <name type="scientific">Mus musculus</name>
    <name type="common">Mouse</name>
    <dbReference type="NCBI Taxonomy" id="10090"/>
    <lineage>
        <taxon>Eukaryota</taxon>
        <taxon>Metazoa</taxon>
        <taxon>Chordata</taxon>
        <taxon>Craniata</taxon>
        <taxon>Vertebrata</taxon>
        <taxon>Euteleostomi</taxon>
        <taxon>Mammalia</taxon>
        <taxon>Eutheria</taxon>
        <taxon>Euarchontoglires</taxon>
        <taxon>Glires</taxon>
        <taxon>Rodentia</taxon>
        <taxon>Myomorpha</taxon>
        <taxon>Muroidea</taxon>
        <taxon>Muridae</taxon>
        <taxon>Murinae</taxon>
        <taxon>Mus</taxon>
        <taxon>Mus</taxon>
    </lineage>
</organism>
<gene>
    <name evidence="4" type="primary">Alkal2</name>
    <name evidence="4" type="synonym">Fam150b</name>
</gene>
<sequence length="151" mass="17496">MRVSGRPMLLALLLLLSTVGDRGRAQSRGPADRQTLLRLLVELVQELKKFHIGDSKRLQLLGESDFALGRREATDYGADQEEQRVEIVPRDLRMKDKFLKHLTGPLYFSPKCSKHFHRLYHNTRDCTIPAYYKRCARLLTRLAVSPMCMER</sequence>
<name>ALKL2_MOUSE</name>
<protein>
    <recommendedName>
        <fullName>ALK and LTK ligand 2</fullName>
    </recommendedName>
</protein>
<feature type="signal peptide" evidence="2">
    <location>
        <begin position="1"/>
        <end position="25"/>
    </location>
</feature>
<feature type="chain" id="PRO_0000353120" description="ALK and LTK ligand 2">
    <location>
        <begin position="26"/>
        <end position="151"/>
    </location>
</feature>
<feature type="disulfide bond" evidence="1">
    <location>
        <begin position="112"/>
        <end position="148"/>
    </location>
</feature>
<feature type="disulfide bond" evidence="1">
    <location>
        <begin position="126"/>
        <end position="135"/>
    </location>
</feature>
<feature type="sequence conflict" description="In Ref. 3; AAH46522." evidence="3" ref="3">
    <original>S</original>
    <variation>T</variation>
    <location>
        <position position="17"/>
    </location>
</feature>
<reference key="1">
    <citation type="journal article" date="2009" name="PLoS Biol.">
        <title>Lineage-specific biology revealed by a finished genome assembly of the mouse.</title>
        <authorList>
            <person name="Church D.M."/>
            <person name="Goodstadt L."/>
            <person name="Hillier L.W."/>
            <person name="Zody M.C."/>
            <person name="Goldstein S."/>
            <person name="She X."/>
            <person name="Bult C.J."/>
            <person name="Agarwala R."/>
            <person name="Cherry J.L."/>
            <person name="DiCuccio M."/>
            <person name="Hlavina W."/>
            <person name="Kapustin Y."/>
            <person name="Meric P."/>
            <person name="Maglott D."/>
            <person name="Birtle Z."/>
            <person name="Marques A.C."/>
            <person name="Graves T."/>
            <person name="Zhou S."/>
            <person name="Teague B."/>
            <person name="Potamousis K."/>
            <person name="Churas C."/>
            <person name="Place M."/>
            <person name="Herschleb J."/>
            <person name="Runnheim R."/>
            <person name="Forrest D."/>
            <person name="Amos-Landgraf J."/>
            <person name="Schwartz D.C."/>
            <person name="Cheng Z."/>
            <person name="Lindblad-Toh K."/>
            <person name="Eichler E.E."/>
            <person name="Ponting C.P."/>
        </authorList>
    </citation>
    <scope>NUCLEOTIDE SEQUENCE [LARGE SCALE GENOMIC DNA]</scope>
    <source>
        <strain>C57BL/6J</strain>
    </source>
</reference>
<reference key="2">
    <citation type="submission" date="2005-07" db="EMBL/GenBank/DDBJ databases">
        <authorList>
            <person name="Mural R.J."/>
            <person name="Adams M.D."/>
            <person name="Myers E.W."/>
            <person name="Smith H.O."/>
            <person name="Venter J.C."/>
        </authorList>
    </citation>
    <scope>NUCLEOTIDE SEQUENCE [LARGE SCALE GENOMIC DNA]</scope>
</reference>
<reference key="3">
    <citation type="journal article" date="2004" name="Genome Res.">
        <title>The status, quality, and expansion of the NIH full-length cDNA project: the Mammalian Gene Collection (MGC).</title>
        <authorList>
            <consortium name="The MGC Project Team"/>
        </authorList>
    </citation>
    <scope>NUCLEOTIDE SEQUENCE [LARGE SCALE MRNA]</scope>
    <source>
        <strain>129</strain>
        <tissue>Mammary tumor</tissue>
    </source>
</reference>
<evidence type="ECO:0000250" key="1">
    <source>
        <dbReference type="UniProtKB" id="Q6UX46"/>
    </source>
</evidence>
<evidence type="ECO:0000255" key="2"/>
<evidence type="ECO:0000305" key="3"/>
<evidence type="ECO:0000312" key="4">
    <source>
        <dbReference type="MGI" id="MGI:3697448"/>
    </source>
</evidence>